<keyword id="KW-1185">Reference proteome</keyword>
<proteinExistence type="inferred from homology"/>
<organism>
    <name type="scientific">Xanthobacter autotrophicus (strain ATCC BAA-1158 / Py2)</name>
    <dbReference type="NCBI Taxonomy" id="78245"/>
    <lineage>
        <taxon>Bacteria</taxon>
        <taxon>Pseudomonadati</taxon>
        <taxon>Pseudomonadota</taxon>
        <taxon>Alphaproteobacteria</taxon>
        <taxon>Hyphomicrobiales</taxon>
        <taxon>Xanthobacteraceae</taxon>
        <taxon>Xanthobacter</taxon>
    </lineage>
</organism>
<protein>
    <recommendedName>
        <fullName evidence="1">UPF0262 protein Xaut_1232</fullName>
    </recommendedName>
</protein>
<gene>
    <name type="ordered locus">Xaut_1232</name>
</gene>
<name>Y1232_XANP2</name>
<sequence>MSDKPDARPSARLSAVTLDDASIGHSSADIDHERATAIWDLIEDNSFAPCGDPGEGPYTLHISLMESRLVLDIKRESGEQVVQHHLSLTPFRKVVKDYFLVCESYYNAIRSASPSQIEAIDMGRRGLHNEGSTLLQERLEGKVDLDFDSARRLFTLICALHWKG</sequence>
<feature type="chain" id="PRO_1000131653" description="UPF0262 protein Xaut_1232">
    <location>
        <begin position="1"/>
        <end position="164"/>
    </location>
</feature>
<reference key="1">
    <citation type="submission" date="2007-07" db="EMBL/GenBank/DDBJ databases">
        <title>Complete sequence of chromosome of Xanthobacter autotrophicus Py2.</title>
        <authorList>
            <consortium name="US DOE Joint Genome Institute"/>
            <person name="Copeland A."/>
            <person name="Lucas S."/>
            <person name="Lapidus A."/>
            <person name="Barry K."/>
            <person name="Glavina del Rio T."/>
            <person name="Hammon N."/>
            <person name="Israni S."/>
            <person name="Dalin E."/>
            <person name="Tice H."/>
            <person name="Pitluck S."/>
            <person name="Sims D."/>
            <person name="Brettin T."/>
            <person name="Bruce D."/>
            <person name="Detter J.C."/>
            <person name="Han C."/>
            <person name="Tapia R."/>
            <person name="Brainard J."/>
            <person name="Schmutz J."/>
            <person name="Larimer F."/>
            <person name="Land M."/>
            <person name="Hauser L."/>
            <person name="Kyrpides N."/>
            <person name="Kim E."/>
            <person name="Ensigns S.A."/>
            <person name="Richardson P."/>
        </authorList>
    </citation>
    <scope>NUCLEOTIDE SEQUENCE [LARGE SCALE GENOMIC DNA]</scope>
    <source>
        <strain>ATCC BAA-1158 / Py2</strain>
    </source>
</reference>
<evidence type="ECO:0000255" key="1">
    <source>
        <dbReference type="HAMAP-Rule" id="MF_00678"/>
    </source>
</evidence>
<dbReference type="EMBL" id="CP000781">
    <property type="protein sequence ID" value="ABS66481.1"/>
    <property type="molecule type" value="Genomic_DNA"/>
</dbReference>
<dbReference type="STRING" id="78245.Xaut_1232"/>
<dbReference type="KEGG" id="xau:Xaut_1232"/>
<dbReference type="eggNOG" id="COG5328">
    <property type="taxonomic scope" value="Bacteria"/>
</dbReference>
<dbReference type="HOGENOM" id="CLU_112904_0_0_5"/>
<dbReference type="OrthoDB" id="9798434at2"/>
<dbReference type="PhylomeDB" id="A7IEN8"/>
<dbReference type="Proteomes" id="UP000002417">
    <property type="component" value="Chromosome"/>
</dbReference>
<dbReference type="HAMAP" id="MF_00678">
    <property type="entry name" value="UPF0262"/>
    <property type="match status" value="1"/>
</dbReference>
<dbReference type="InterPro" id="IPR008321">
    <property type="entry name" value="UCP032146"/>
</dbReference>
<dbReference type="NCBIfam" id="NF002769">
    <property type="entry name" value="PRK02853.1"/>
    <property type="match status" value="1"/>
</dbReference>
<dbReference type="Pfam" id="PF06793">
    <property type="entry name" value="UPF0262"/>
    <property type="match status" value="1"/>
</dbReference>
<dbReference type="PIRSF" id="PIRSF032146">
    <property type="entry name" value="UCP032146"/>
    <property type="match status" value="1"/>
</dbReference>
<accession>A7IEN8</accession>
<comment type="similarity">
    <text evidence="1">Belongs to the UPF0262 family.</text>
</comment>